<keyword id="KW-0240">DNA-directed RNA polymerase</keyword>
<keyword id="KW-0548">Nucleotidyltransferase</keyword>
<keyword id="KW-1185">Reference proteome</keyword>
<keyword id="KW-0804">Transcription</keyword>
<keyword id="KW-0808">Transferase</keyword>
<dbReference type="EC" id="2.7.7.6" evidence="1"/>
<dbReference type="EMBL" id="CP000233">
    <property type="protein sequence ID" value="ABD99012.1"/>
    <property type="molecule type" value="Genomic_DNA"/>
</dbReference>
<dbReference type="RefSeq" id="WP_003699705.1">
    <property type="nucleotide sequence ID" value="NC_007929.1"/>
</dbReference>
<dbReference type="RefSeq" id="YP_535095.1">
    <property type="nucleotide sequence ID" value="NC_007929.1"/>
</dbReference>
<dbReference type="SMR" id="Q1WVA5"/>
<dbReference type="STRING" id="362948.LSL_0197"/>
<dbReference type="KEGG" id="lsl:LSL_0197"/>
<dbReference type="PATRIC" id="fig|362948.14.peg.274"/>
<dbReference type="HOGENOM" id="CLU_000524_4_3_9"/>
<dbReference type="OrthoDB" id="9803954at2"/>
<dbReference type="Proteomes" id="UP000006559">
    <property type="component" value="Chromosome"/>
</dbReference>
<dbReference type="GO" id="GO:0000428">
    <property type="term" value="C:DNA-directed RNA polymerase complex"/>
    <property type="evidence" value="ECO:0007669"/>
    <property type="project" value="UniProtKB-KW"/>
</dbReference>
<dbReference type="GO" id="GO:0003677">
    <property type="term" value="F:DNA binding"/>
    <property type="evidence" value="ECO:0007669"/>
    <property type="project" value="UniProtKB-UniRule"/>
</dbReference>
<dbReference type="GO" id="GO:0003899">
    <property type="term" value="F:DNA-directed RNA polymerase activity"/>
    <property type="evidence" value="ECO:0007669"/>
    <property type="project" value="UniProtKB-UniRule"/>
</dbReference>
<dbReference type="GO" id="GO:0032549">
    <property type="term" value="F:ribonucleoside binding"/>
    <property type="evidence" value="ECO:0007669"/>
    <property type="project" value="InterPro"/>
</dbReference>
<dbReference type="GO" id="GO:0006351">
    <property type="term" value="P:DNA-templated transcription"/>
    <property type="evidence" value="ECO:0007669"/>
    <property type="project" value="UniProtKB-UniRule"/>
</dbReference>
<dbReference type="CDD" id="cd00653">
    <property type="entry name" value="RNA_pol_B_RPB2"/>
    <property type="match status" value="1"/>
</dbReference>
<dbReference type="FunFam" id="3.90.1800.10:FF:000001">
    <property type="entry name" value="DNA-directed RNA polymerase subunit beta"/>
    <property type="match status" value="1"/>
</dbReference>
<dbReference type="Gene3D" id="2.40.50.100">
    <property type="match status" value="1"/>
</dbReference>
<dbReference type="Gene3D" id="2.40.50.150">
    <property type="match status" value="1"/>
</dbReference>
<dbReference type="Gene3D" id="3.90.1100.10">
    <property type="match status" value="2"/>
</dbReference>
<dbReference type="Gene3D" id="2.30.150.10">
    <property type="entry name" value="DNA-directed RNA polymerase, beta subunit, external 1 domain"/>
    <property type="match status" value="1"/>
</dbReference>
<dbReference type="Gene3D" id="2.40.270.10">
    <property type="entry name" value="DNA-directed RNA polymerase, subunit 2, domain 6"/>
    <property type="match status" value="1"/>
</dbReference>
<dbReference type="Gene3D" id="3.90.1800.10">
    <property type="entry name" value="RNA polymerase alpha subunit dimerisation domain"/>
    <property type="match status" value="1"/>
</dbReference>
<dbReference type="Gene3D" id="3.90.1110.10">
    <property type="entry name" value="RNA polymerase Rpb2, domain 2"/>
    <property type="match status" value="1"/>
</dbReference>
<dbReference type="HAMAP" id="MF_01321">
    <property type="entry name" value="RNApol_bact_RpoB"/>
    <property type="match status" value="1"/>
</dbReference>
<dbReference type="InterPro" id="IPR042107">
    <property type="entry name" value="DNA-dir_RNA_pol_bsu_ext_1_sf"/>
</dbReference>
<dbReference type="InterPro" id="IPR019462">
    <property type="entry name" value="DNA-dir_RNA_pol_bsu_external_1"/>
</dbReference>
<dbReference type="InterPro" id="IPR015712">
    <property type="entry name" value="DNA-dir_RNA_pol_su2"/>
</dbReference>
<dbReference type="InterPro" id="IPR007120">
    <property type="entry name" value="DNA-dir_RNAP_su2_dom"/>
</dbReference>
<dbReference type="InterPro" id="IPR037033">
    <property type="entry name" value="DNA-dir_RNAP_su2_hyb_sf"/>
</dbReference>
<dbReference type="InterPro" id="IPR010243">
    <property type="entry name" value="RNA_pol_bsu_bac"/>
</dbReference>
<dbReference type="InterPro" id="IPR007121">
    <property type="entry name" value="RNA_pol_bsu_CS"/>
</dbReference>
<dbReference type="InterPro" id="IPR007644">
    <property type="entry name" value="RNA_pol_bsu_protrusion"/>
</dbReference>
<dbReference type="InterPro" id="IPR007642">
    <property type="entry name" value="RNA_pol_Rpb2_2"/>
</dbReference>
<dbReference type="InterPro" id="IPR037034">
    <property type="entry name" value="RNA_pol_Rpb2_2_sf"/>
</dbReference>
<dbReference type="InterPro" id="IPR007645">
    <property type="entry name" value="RNA_pol_Rpb2_3"/>
</dbReference>
<dbReference type="InterPro" id="IPR007641">
    <property type="entry name" value="RNA_pol_Rpb2_7"/>
</dbReference>
<dbReference type="InterPro" id="IPR014724">
    <property type="entry name" value="RNA_pol_RPB2_OB-fold"/>
</dbReference>
<dbReference type="NCBIfam" id="NF001616">
    <property type="entry name" value="PRK00405.1"/>
    <property type="match status" value="1"/>
</dbReference>
<dbReference type="NCBIfam" id="TIGR02013">
    <property type="entry name" value="rpoB"/>
    <property type="match status" value="1"/>
</dbReference>
<dbReference type="PANTHER" id="PTHR20856">
    <property type="entry name" value="DNA-DIRECTED RNA POLYMERASE I SUBUNIT 2"/>
    <property type="match status" value="1"/>
</dbReference>
<dbReference type="Pfam" id="PF04563">
    <property type="entry name" value="RNA_pol_Rpb2_1"/>
    <property type="match status" value="1"/>
</dbReference>
<dbReference type="Pfam" id="PF04561">
    <property type="entry name" value="RNA_pol_Rpb2_2"/>
    <property type="match status" value="2"/>
</dbReference>
<dbReference type="Pfam" id="PF04565">
    <property type="entry name" value="RNA_pol_Rpb2_3"/>
    <property type="match status" value="1"/>
</dbReference>
<dbReference type="Pfam" id="PF10385">
    <property type="entry name" value="RNA_pol_Rpb2_45"/>
    <property type="match status" value="1"/>
</dbReference>
<dbReference type="Pfam" id="PF00562">
    <property type="entry name" value="RNA_pol_Rpb2_6"/>
    <property type="match status" value="1"/>
</dbReference>
<dbReference type="Pfam" id="PF04560">
    <property type="entry name" value="RNA_pol_Rpb2_7"/>
    <property type="match status" value="1"/>
</dbReference>
<dbReference type="SUPFAM" id="SSF64484">
    <property type="entry name" value="beta and beta-prime subunits of DNA dependent RNA-polymerase"/>
    <property type="match status" value="1"/>
</dbReference>
<dbReference type="PROSITE" id="PS01166">
    <property type="entry name" value="RNA_POL_BETA"/>
    <property type="match status" value="1"/>
</dbReference>
<proteinExistence type="inferred from homology"/>
<evidence type="ECO:0000255" key="1">
    <source>
        <dbReference type="HAMAP-Rule" id="MF_01321"/>
    </source>
</evidence>
<evidence type="ECO:0000256" key="2">
    <source>
        <dbReference type="SAM" id="MobiDB-lite"/>
    </source>
</evidence>
<name>RPOB_LIGS1</name>
<feature type="chain" id="PRO_0000300334" description="DNA-directed RNA polymerase subunit beta">
    <location>
        <begin position="1"/>
        <end position="1199"/>
    </location>
</feature>
<feature type="region of interest" description="Disordered" evidence="2">
    <location>
        <begin position="1177"/>
        <end position="1199"/>
    </location>
</feature>
<comment type="function">
    <text evidence="1">DNA-dependent RNA polymerase catalyzes the transcription of DNA into RNA using the four ribonucleoside triphosphates as substrates.</text>
</comment>
<comment type="catalytic activity">
    <reaction evidence="1">
        <text>RNA(n) + a ribonucleoside 5'-triphosphate = RNA(n+1) + diphosphate</text>
        <dbReference type="Rhea" id="RHEA:21248"/>
        <dbReference type="Rhea" id="RHEA-COMP:14527"/>
        <dbReference type="Rhea" id="RHEA-COMP:17342"/>
        <dbReference type="ChEBI" id="CHEBI:33019"/>
        <dbReference type="ChEBI" id="CHEBI:61557"/>
        <dbReference type="ChEBI" id="CHEBI:140395"/>
        <dbReference type="EC" id="2.7.7.6"/>
    </reaction>
</comment>
<comment type="subunit">
    <text evidence="1">The RNAP catalytic core consists of 2 alpha, 1 beta, 1 beta' and 1 omega subunit. When a sigma factor is associated with the core the holoenzyme is formed, which can initiate transcription.</text>
</comment>
<comment type="similarity">
    <text evidence="1">Belongs to the RNA polymerase beta chain family.</text>
</comment>
<accession>Q1WVA5</accession>
<organism>
    <name type="scientific">Ligilactobacillus salivarius (strain UCC118)</name>
    <name type="common">Lactobacillus salivarius</name>
    <dbReference type="NCBI Taxonomy" id="362948"/>
    <lineage>
        <taxon>Bacteria</taxon>
        <taxon>Bacillati</taxon>
        <taxon>Bacillota</taxon>
        <taxon>Bacilli</taxon>
        <taxon>Lactobacillales</taxon>
        <taxon>Lactobacillaceae</taxon>
        <taxon>Ligilactobacillus</taxon>
    </lineage>
</organism>
<gene>
    <name evidence="1" type="primary">rpoB</name>
    <name type="ordered locus">LSL_0197</name>
</gene>
<protein>
    <recommendedName>
        <fullName evidence="1">DNA-directed RNA polymerase subunit beta</fullName>
        <shortName evidence="1">RNAP subunit beta</shortName>
        <ecNumber evidence="1">2.7.7.6</ecNumber>
    </recommendedName>
    <alternativeName>
        <fullName evidence="1">RNA polymerase subunit beta</fullName>
    </alternativeName>
    <alternativeName>
        <fullName evidence="1">Transcriptase subunit beta</fullName>
    </alternativeName>
</protein>
<reference key="1">
    <citation type="journal article" date="2006" name="Proc. Natl. Acad. Sci. U.S.A.">
        <title>Multireplicon genome architecture of Lactobacillus salivarius.</title>
        <authorList>
            <person name="Claesson M.J."/>
            <person name="Li Y."/>
            <person name="Leahy S."/>
            <person name="Canchaya C."/>
            <person name="van Pijkeren J.P."/>
            <person name="Cerdeno-Tarraga A.M."/>
            <person name="Parkhill J."/>
            <person name="Flynn S."/>
            <person name="O'Sullivan G.C."/>
            <person name="Collins J.K."/>
            <person name="Higgins D."/>
            <person name="Shanahan F."/>
            <person name="Fitzgerald G.F."/>
            <person name="van Sinderen D."/>
            <person name="O'Toole P.W."/>
        </authorList>
    </citation>
    <scope>NUCLEOTIDE SEQUENCE [LARGE SCALE GENOMIC DNA]</scope>
    <source>
        <strain>UCC118</strain>
    </source>
</reference>
<sequence>MNNLAGHLVKYGKHRVRRSYSRIKEVLDLPNLIEVQTDSYKWFLDEGLREMFDDIMPIEDFQGKLSLEFVDYQLLEPKYTVEEARQHDANYSAPLHVTLRLINHETGEIKSQDVFFGDFPLMTKQGTFIINGAERVIVSQLVRSPGVYFNSELDKNGRTNYGTTVIPNRGAWLEYETDAKNVAYVRIDRTRKIPLTELIRALGYGSDNEIVEILGSNSDSLMLTLEKDVHKNMDDSRVEESLKDIYERLRPGEPKTADSSRSLLTARFFDPKRYDLAPVGRYKINKKLDLKTRLLNLTVAETLADPDTGEIIVNKDEVIDKQVMDKLAPYLARDDFKTFTFHPSEEGVVQEPMTLQIVKVYSPKDPEKVVNVIGNANVDIQFKHITPADIVASMNYFFNLQEGMGSTDDIDHLGNRRTRSVGELLQNQFRIGLSRMERVVRERMSIQDTSTVTPQQLINIRPVVASIKEFFGSSQLSQFMDQTNPLGELSHKRRFSALGPGGLTRDRAGYEVRDVHYTHYGRMCPIETPEGPNIGLINSLSSYARINKYGFVETPYRRVSWETHKVTDKIDYLTADEEDNYVIAQANSPLNDDGSFVDDVVMARKKDDDVEISTEKVDYMDVSPKQVVAVATACIPFLENDDSNRALMGANMQRQAVPLIKPHAPLVGTGIEYKAAHDSGVALISEHEGTVEYVDAREIRVRRDDGSLDKYKLMKFHRSNGGKNYNQTPIVRVGDRVDADEVLADGPAMENGELALGQNPLIAFMTWDGYNFEDAIAINERLVKEDVYTSIHIEEHESEARDTKLGPEEITREIPNVGEDALKNLDEFGIIRIGAEVKDGDILVGKVTPKGVTELSAEERLLHAIFGEKAREVRDTSLRVPHGAGGIVQDVKIFTREGGDELSPGVNMMVRVYIAQKRKLQVGDKMAGRHGNKGTVSVVIPEEDMPFMPDGTPIDIMLSPMGVPSRMNIGQVLDLHLGMAARKLGIHVASPVFDGARDEDIWSALQEAGLPGDGKTVLYDGRTGEAFDNRIAVGVMYYLKLAHMVDDKIHARSIGPYSLVTQQPLGGKAQFGGQRFGEMEVWALEAYGAAYTLQEILTYKSDDVVGRVKTYEAIVKGEPIPKPGVPESFRVLVKELQALGMDMKVLDADKNEIELRDMDDEDDDIVNVDALKKFAKEQEEKKAKEAEQETAEKEETKTE</sequence>